<sequence length="971" mass="110443">MTVKNETIDYSKTLYLPQTNFPMRGRLPQKELELIARWDNMGLYAQLRQQAKDRPLYILHDGPPYANGHIHIGHALNKVLKDVIIRSFQMRGFNANYVPGWDCHGLPIEWKIEEKYRAQGKNKDDVPLNEFRQECREFAKYWITVQSEEFKRLGVVGDFNSPYTTMAFHAEARIASELMKFAMSGQIYRGSKPVMWSVVERTALAEAEIEYHDYESEVIWVKFPVLQADSSDLCGAYVVIWTTTPWTIPGNRAVSYSSQISYGVYEVASTQNDFGPQVGERLLFADALAMSCAEKAKLVLKRLRIISADELKTLFLFHPLKGFAGSYNDKIAMLDGAHVTENAGTGFVHTAPSHGREDFEIWNAYKPLLEQFGIDSSIPFPVDDAGFYTKDAPGFGPNREGGAVRVIDDNGKMGDANKEVINALIKADRLFARGRLKHSYPHSWRSKKPVIFRNTPQWFISMDKDLGDGSTLRSRALEAVSMTRFVPSSGQSRLASMIADRPDWVLSRQRAWGVPICIFANEDGVILKDERVNERILRAFEAEGADAWFAEGARERFLGERAHESWVQVLDILDVWFDSGASHSFVLEDRDDLKWPADVYFEGSDQHRGWFQSSLLESCGTRACSPYKAVITHGFTLDENGKKMSKSLGNTVVPQEIIKTSGADIFRLWVMTTDYWEDQRLGKQILQTNMDLYRKLRNAIRWMLGILAHDEGEKISYCALPDLEKFILHQLFELDQLINRAYDEFDFKKIMRALLDFSITELSAFYFDIRKDSLYCDAPSSKKRKASLQVIREIFERMVIWLAPMLPFTMEEAWLEHSPKSHSVHLEQFRSVPGEWQNGFLAERWRKVRQVRKVVTGALEFERAAKRIGSSLEAAPIVFISNPVLLEALENLDMAEICITSALTITQDVPPSDAFILSDVEGVGVYPGKALGTKCARSWRYTQDVGSDPAYPDVSARDAAALRELQMLGKI</sequence>
<proteinExistence type="inferred from homology"/>
<protein>
    <recommendedName>
        <fullName evidence="1">Isoleucine--tRNA ligase</fullName>
        <ecNumber evidence="1">6.1.1.5</ecNumber>
    </recommendedName>
    <alternativeName>
        <fullName evidence="1">Isoleucyl-tRNA synthetase</fullName>
        <shortName evidence="1">IleRS</shortName>
    </alternativeName>
</protein>
<comment type="function">
    <text evidence="1">Catalyzes the attachment of isoleucine to tRNA(Ile). As IleRS can inadvertently accommodate and process structurally similar amino acids such as valine, to avoid such errors it has two additional distinct tRNA(Ile)-dependent editing activities. One activity is designated as 'pretransfer' editing and involves the hydrolysis of activated Val-AMP. The other activity is designated 'posttransfer' editing and involves deacylation of mischarged Val-tRNA(Ile).</text>
</comment>
<comment type="catalytic activity">
    <reaction evidence="1">
        <text>tRNA(Ile) + L-isoleucine + ATP = L-isoleucyl-tRNA(Ile) + AMP + diphosphate</text>
        <dbReference type="Rhea" id="RHEA:11060"/>
        <dbReference type="Rhea" id="RHEA-COMP:9666"/>
        <dbReference type="Rhea" id="RHEA-COMP:9695"/>
        <dbReference type="ChEBI" id="CHEBI:30616"/>
        <dbReference type="ChEBI" id="CHEBI:33019"/>
        <dbReference type="ChEBI" id="CHEBI:58045"/>
        <dbReference type="ChEBI" id="CHEBI:78442"/>
        <dbReference type="ChEBI" id="CHEBI:78528"/>
        <dbReference type="ChEBI" id="CHEBI:456215"/>
        <dbReference type="EC" id="6.1.1.5"/>
    </reaction>
</comment>
<comment type="subunit">
    <text evidence="1">Monomer.</text>
</comment>
<comment type="subcellular location">
    <subcellularLocation>
        <location evidence="1">Cytoplasm</location>
    </subcellularLocation>
</comment>
<comment type="domain">
    <text evidence="1">IleRS has two distinct active sites: one for aminoacylation and one for editing. The misactivated valine is translocated from the active site to the editing site, which sterically excludes the correctly activated isoleucine. The single editing site contains two valyl binding pockets, one specific for each substrate (Val-AMP or Val-tRNA(Ile)).</text>
</comment>
<comment type="similarity">
    <text evidence="1">Belongs to the class-I aminoacyl-tRNA synthetase family. IleS type 1 subfamily.</text>
</comment>
<dbReference type="EC" id="6.1.1.5" evidence="1"/>
<dbReference type="EMBL" id="BX897700">
    <property type="protein sequence ID" value="CAF25747.1"/>
    <property type="molecule type" value="Genomic_DNA"/>
</dbReference>
<dbReference type="RefSeq" id="WP_011179057.1">
    <property type="nucleotide sequence ID" value="NC_005955.1"/>
</dbReference>
<dbReference type="SMR" id="Q6G0K6"/>
<dbReference type="KEGG" id="bqu:BQ02440"/>
<dbReference type="eggNOG" id="COG0060">
    <property type="taxonomic scope" value="Bacteria"/>
</dbReference>
<dbReference type="HOGENOM" id="CLU_001493_7_1_5"/>
<dbReference type="OrthoDB" id="9810365at2"/>
<dbReference type="Proteomes" id="UP000000597">
    <property type="component" value="Chromosome"/>
</dbReference>
<dbReference type="GO" id="GO:0005829">
    <property type="term" value="C:cytosol"/>
    <property type="evidence" value="ECO:0007669"/>
    <property type="project" value="TreeGrafter"/>
</dbReference>
<dbReference type="GO" id="GO:0002161">
    <property type="term" value="F:aminoacyl-tRNA deacylase activity"/>
    <property type="evidence" value="ECO:0007669"/>
    <property type="project" value="InterPro"/>
</dbReference>
<dbReference type="GO" id="GO:0005524">
    <property type="term" value="F:ATP binding"/>
    <property type="evidence" value="ECO:0007669"/>
    <property type="project" value="UniProtKB-UniRule"/>
</dbReference>
<dbReference type="GO" id="GO:0004822">
    <property type="term" value="F:isoleucine-tRNA ligase activity"/>
    <property type="evidence" value="ECO:0007669"/>
    <property type="project" value="UniProtKB-UniRule"/>
</dbReference>
<dbReference type="GO" id="GO:0000049">
    <property type="term" value="F:tRNA binding"/>
    <property type="evidence" value="ECO:0007669"/>
    <property type="project" value="InterPro"/>
</dbReference>
<dbReference type="GO" id="GO:0006428">
    <property type="term" value="P:isoleucyl-tRNA aminoacylation"/>
    <property type="evidence" value="ECO:0007669"/>
    <property type="project" value="UniProtKB-UniRule"/>
</dbReference>
<dbReference type="CDD" id="cd07960">
    <property type="entry name" value="Anticodon_Ia_Ile_BEm"/>
    <property type="match status" value="1"/>
</dbReference>
<dbReference type="FunFam" id="3.40.50.620:FF:000042">
    <property type="entry name" value="Isoleucine--tRNA ligase"/>
    <property type="match status" value="1"/>
</dbReference>
<dbReference type="Gene3D" id="1.10.730.20">
    <property type="match status" value="1"/>
</dbReference>
<dbReference type="Gene3D" id="3.40.50.620">
    <property type="entry name" value="HUPs"/>
    <property type="match status" value="2"/>
</dbReference>
<dbReference type="Gene3D" id="3.90.740.10">
    <property type="entry name" value="Valyl/Leucyl/Isoleucyl-tRNA synthetase, editing domain"/>
    <property type="match status" value="1"/>
</dbReference>
<dbReference type="HAMAP" id="MF_02002">
    <property type="entry name" value="Ile_tRNA_synth_type1"/>
    <property type="match status" value="1"/>
</dbReference>
<dbReference type="InterPro" id="IPR001412">
    <property type="entry name" value="aa-tRNA-synth_I_CS"/>
</dbReference>
<dbReference type="InterPro" id="IPR002300">
    <property type="entry name" value="aa-tRNA-synth_Ia"/>
</dbReference>
<dbReference type="InterPro" id="IPR033708">
    <property type="entry name" value="Anticodon_Ile_BEm"/>
</dbReference>
<dbReference type="InterPro" id="IPR002301">
    <property type="entry name" value="Ile-tRNA-ligase"/>
</dbReference>
<dbReference type="InterPro" id="IPR023585">
    <property type="entry name" value="Ile-tRNA-ligase_type1"/>
</dbReference>
<dbReference type="InterPro" id="IPR050081">
    <property type="entry name" value="Ile-tRNA_ligase"/>
</dbReference>
<dbReference type="InterPro" id="IPR013155">
    <property type="entry name" value="M/V/L/I-tRNA-synth_anticd-bd"/>
</dbReference>
<dbReference type="InterPro" id="IPR014729">
    <property type="entry name" value="Rossmann-like_a/b/a_fold"/>
</dbReference>
<dbReference type="InterPro" id="IPR009080">
    <property type="entry name" value="tRNAsynth_Ia_anticodon-bd"/>
</dbReference>
<dbReference type="InterPro" id="IPR009008">
    <property type="entry name" value="Val/Leu/Ile-tRNA-synth_edit"/>
</dbReference>
<dbReference type="NCBIfam" id="TIGR00392">
    <property type="entry name" value="ileS"/>
    <property type="match status" value="1"/>
</dbReference>
<dbReference type="PANTHER" id="PTHR42765:SF1">
    <property type="entry name" value="ISOLEUCINE--TRNA LIGASE, MITOCHONDRIAL"/>
    <property type="match status" value="1"/>
</dbReference>
<dbReference type="PANTHER" id="PTHR42765">
    <property type="entry name" value="SOLEUCYL-TRNA SYNTHETASE"/>
    <property type="match status" value="1"/>
</dbReference>
<dbReference type="Pfam" id="PF08264">
    <property type="entry name" value="Anticodon_1"/>
    <property type="match status" value="1"/>
</dbReference>
<dbReference type="Pfam" id="PF00133">
    <property type="entry name" value="tRNA-synt_1"/>
    <property type="match status" value="1"/>
</dbReference>
<dbReference type="PRINTS" id="PR00984">
    <property type="entry name" value="TRNASYNTHILE"/>
</dbReference>
<dbReference type="SUPFAM" id="SSF47323">
    <property type="entry name" value="Anticodon-binding domain of a subclass of class I aminoacyl-tRNA synthetases"/>
    <property type="match status" value="1"/>
</dbReference>
<dbReference type="SUPFAM" id="SSF52374">
    <property type="entry name" value="Nucleotidylyl transferase"/>
    <property type="match status" value="1"/>
</dbReference>
<dbReference type="SUPFAM" id="SSF50677">
    <property type="entry name" value="ValRS/IleRS/LeuRS editing domain"/>
    <property type="match status" value="1"/>
</dbReference>
<dbReference type="PROSITE" id="PS00178">
    <property type="entry name" value="AA_TRNA_LIGASE_I"/>
    <property type="match status" value="1"/>
</dbReference>
<evidence type="ECO:0000255" key="1">
    <source>
        <dbReference type="HAMAP-Rule" id="MF_02002"/>
    </source>
</evidence>
<gene>
    <name evidence="1" type="primary">ileS</name>
    <name type="ordered locus">BQ02440</name>
</gene>
<name>SYI_BARQU</name>
<reference key="1">
    <citation type="journal article" date="2004" name="Proc. Natl. Acad. Sci. U.S.A.">
        <title>The louse-borne human pathogen Bartonella quintana is a genomic derivative of the zoonotic agent Bartonella henselae.</title>
        <authorList>
            <person name="Alsmark U.C.M."/>
            <person name="Frank A.C."/>
            <person name="Karlberg E.O."/>
            <person name="Legault B.-A."/>
            <person name="Ardell D.H."/>
            <person name="Canbaeck B."/>
            <person name="Eriksson A.-S."/>
            <person name="Naeslund A.K."/>
            <person name="Handley S.A."/>
            <person name="Huvet M."/>
            <person name="La Scola B."/>
            <person name="Holmberg M."/>
            <person name="Andersson S.G.E."/>
        </authorList>
    </citation>
    <scope>NUCLEOTIDE SEQUENCE [LARGE SCALE GENOMIC DNA]</scope>
    <source>
        <strain>Toulouse</strain>
    </source>
</reference>
<keyword id="KW-0030">Aminoacyl-tRNA synthetase</keyword>
<keyword id="KW-0067">ATP-binding</keyword>
<keyword id="KW-0963">Cytoplasm</keyword>
<keyword id="KW-0436">Ligase</keyword>
<keyword id="KW-0547">Nucleotide-binding</keyword>
<keyword id="KW-0648">Protein biosynthesis</keyword>
<organism>
    <name type="scientific">Bartonella quintana (strain Toulouse)</name>
    <name type="common">Rochalimaea quintana</name>
    <dbReference type="NCBI Taxonomy" id="283165"/>
    <lineage>
        <taxon>Bacteria</taxon>
        <taxon>Pseudomonadati</taxon>
        <taxon>Pseudomonadota</taxon>
        <taxon>Alphaproteobacteria</taxon>
        <taxon>Hyphomicrobiales</taxon>
        <taxon>Bartonellaceae</taxon>
        <taxon>Bartonella</taxon>
    </lineage>
</organism>
<feature type="chain" id="PRO_0000098354" description="Isoleucine--tRNA ligase">
    <location>
        <begin position="1"/>
        <end position="971"/>
    </location>
</feature>
<feature type="short sequence motif" description="'HIGH' region">
    <location>
        <begin position="64"/>
        <end position="74"/>
    </location>
</feature>
<feature type="short sequence motif" description="'KMSKS' region">
    <location>
        <begin position="643"/>
        <end position="647"/>
    </location>
</feature>
<feature type="binding site" evidence="1">
    <location>
        <position position="602"/>
    </location>
    <ligand>
        <name>L-isoleucyl-5'-AMP</name>
        <dbReference type="ChEBI" id="CHEBI:178002"/>
    </ligand>
</feature>
<feature type="binding site" evidence="1">
    <location>
        <position position="646"/>
    </location>
    <ligand>
        <name>ATP</name>
        <dbReference type="ChEBI" id="CHEBI:30616"/>
    </ligand>
</feature>
<accession>Q6G0K6</accession>